<sequence length="191" mass="21214">MIKCNNKTFNNLLKLTILVNLLISCGLTGATKIRLERSAKDITDEIDAIKKDAALKGVNFDAFKDKKTGSGVSENPFILEAKVRATTVAEKFVIAIEEEATKLKETGSSGEFSAMYDLMFEVSKPLQKLGIQEMTKTVSDAAEENPPTTAQGVLEIAKKMREKLQRVHTKNYCTLKKKENSTFTDEKCKNN</sequence>
<keyword id="KW-0002">3D-structure</keyword>
<keyword id="KW-0614">Plasmid</keyword>
<keyword id="KW-1185">Reference proteome</keyword>
<keyword id="KW-0732">Signal</keyword>
<comment type="function">
    <text>Binds to decorin which may mediate the adherence of B.burgdorferi to collagen fibers in skin and other tissues.</text>
</comment>
<comment type="similarity">
    <text evidence="2">Belongs to the decorin-binding protein family.</text>
</comment>
<reference key="1">
    <citation type="journal article" date="1995" name="Infect. Immun.">
        <title>Adherence of Borrelia burgdorferi to the proteoglycan decorin.</title>
        <authorList>
            <person name="Guo B.P."/>
            <person name="Norris S.J."/>
            <person name="Rosenberg L.C."/>
            <person name="Hook M."/>
        </authorList>
    </citation>
    <scope>NUCLEOTIDE SEQUENCE [GENOMIC DNA]</scope>
    <source>
        <strain>ATCC 53899 / 297</strain>
    </source>
</reference>
<reference key="2">
    <citation type="journal article" date="1998" name="Infect. Immun.">
        <title>Molecular analysis of sequence heterogeneity among genes encoding decorin binding proteins A and B of Borrelia burgdorferi sensu lato.</title>
        <authorList>
            <person name="Roberts W.C."/>
            <person name="Mullikin B.A."/>
            <person name="Lathigra R."/>
            <person name="Hanson M.S."/>
        </authorList>
    </citation>
    <scope>NUCLEOTIDE SEQUENCE [GENOMIC DNA]</scope>
    <source>
        <strain>3028</strain>
        <strain>ATCC 35210 / DSM 4680 / CIP 102532 / B31</strain>
        <strain>HBNC</strain>
        <strain>LP7</strain>
        <strain>Sh-2-82</strain>
    </source>
</reference>
<reference key="3">
    <citation type="journal article" date="1997" name="Nature">
        <title>Genomic sequence of a Lyme disease spirochaete, Borrelia burgdorferi.</title>
        <authorList>
            <person name="Fraser C.M."/>
            <person name="Casjens S."/>
            <person name="Huang W.M."/>
            <person name="Sutton G.G."/>
            <person name="Clayton R.A."/>
            <person name="Lathigra R."/>
            <person name="White O."/>
            <person name="Ketchum K.A."/>
            <person name="Dodson R.J."/>
            <person name="Hickey E.K."/>
            <person name="Gwinn M.L."/>
            <person name="Dougherty B.A."/>
            <person name="Tomb J.-F."/>
            <person name="Fleischmann R.D."/>
            <person name="Richardson D.L."/>
            <person name="Peterson J.D."/>
            <person name="Kerlavage A.R."/>
            <person name="Quackenbush J."/>
            <person name="Salzberg S.L."/>
            <person name="Hanson M."/>
            <person name="van Vugt R."/>
            <person name="Palmer N."/>
            <person name="Adams M.D."/>
            <person name="Gocayne J.D."/>
            <person name="Weidman J.F."/>
            <person name="Utterback T.R."/>
            <person name="Watthey L."/>
            <person name="McDonald L.A."/>
            <person name="Artiach P."/>
            <person name="Bowman C."/>
            <person name="Garland S.A."/>
            <person name="Fujii C."/>
            <person name="Cotton M.D."/>
            <person name="Horst K."/>
            <person name="Roberts K.M."/>
            <person name="Hatch B."/>
            <person name="Smith H.O."/>
            <person name="Venter J.C."/>
        </authorList>
    </citation>
    <scope>NUCLEOTIDE SEQUENCE [LARGE SCALE GENOMIC DNA]</scope>
    <source>
        <strain>ATCC 35210 / DSM 4680 / CIP 102532 / B31</strain>
    </source>
</reference>
<geneLocation type="plasmid">
    <name>lp54</name>
</geneLocation>
<organism>
    <name type="scientific">Borreliella burgdorferi (strain ATCC 35210 / DSM 4680 / CIP 102532 / B31)</name>
    <name type="common">Borrelia burgdorferi</name>
    <dbReference type="NCBI Taxonomy" id="224326"/>
    <lineage>
        <taxon>Bacteria</taxon>
        <taxon>Pseudomonadati</taxon>
        <taxon>Spirochaetota</taxon>
        <taxon>Spirochaetia</taxon>
        <taxon>Spirochaetales</taxon>
        <taxon>Borreliaceae</taxon>
        <taxon>Borreliella</taxon>
    </lineage>
</organism>
<name>DBPA_BORBU</name>
<gene>
    <name type="primary">dbpA</name>
    <name type="ordered locus">BB_A24</name>
</gene>
<proteinExistence type="evidence at protein level"/>
<feature type="signal peptide" evidence="1">
    <location>
        <begin position="1"/>
        <end position="29"/>
    </location>
</feature>
<feature type="chain" id="PRO_0000021074" description="Decorin-binding protein A">
    <location>
        <begin position="30"/>
        <end position="191"/>
    </location>
</feature>
<feature type="sequence variant" description="In strain: 297, LP7 and Sh-2-82.">
    <original>R</original>
    <variation>K</variation>
    <location>
        <position position="34"/>
    </location>
</feature>
<feature type="sequence variant" description="In strain: 297, LP7 and Sh-2-82.">
    <original>R</original>
    <variation>S</variation>
    <location>
        <position position="37"/>
    </location>
</feature>
<feature type="sequence variant" description="In strain: 297, LP7 and Sh-2-82.">
    <original>DIT</original>
    <variation>AIV</variation>
    <location>
        <begin position="41"/>
        <end position="43"/>
    </location>
</feature>
<feature type="sequence variant" description="In strain: 297, LP7 and Sh-2-82.">
    <original>D</original>
    <variation>K</variation>
    <location>
        <position position="52"/>
    </location>
</feature>
<feature type="sequence variant" description="In strain: 297, LP7 and Sh-2-82.">
    <original>LK</original>
    <variation>SM</variation>
    <location>
        <begin position="55"/>
        <end position="56"/>
    </location>
</feature>
<feature type="sequence variant" description="In strain: 297, LP7 and Sh-2-82.">
    <original>K</original>
    <variation>E</variation>
    <location>
        <position position="128"/>
    </location>
</feature>
<feature type="sequence variant" description="In strain: 297, LP7 and Sh-2-82.">
    <original>D</original>
    <variation>M</variation>
    <location>
        <position position="140"/>
    </location>
</feature>
<feature type="sequence variant" description="In strain: 297, LP7 and Sh-2-82.">
    <original>T</original>
    <variation>K</variation>
    <location>
        <position position="169"/>
    </location>
</feature>
<feature type="sequence variant" description="In strain: 297, LP7 and Sh-2-82.">
    <original>YC</original>
    <variation>QD</variation>
    <location>
        <begin position="172"/>
        <end position="173"/>
    </location>
</feature>
<feature type="sequence variant" description="In strain: 297, LP7 and Sh-2-82.">
    <original>ENSTFTDEKCKNN</original>
    <variation>NTEDSTAKS</variation>
    <location>
        <begin position="179"/>
        <end position="191"/>
    </location>
</feature>
<feature type="turn" evidence="3">
    <location>
        <begin position="28"/>
        <end position="30"/>
    </location>
</feature>
<feature type="helix" evidence="3">
    <location>
        <begin position="31"/>
        <end position="55"/>
    </location>
</feature>
<feature type="strand" evidence="3">
    <location>
        <begin position="72"/>
        <end position="74"/>
    </location>
</feature>
<feature type="helix" evidence="3">
    <location>
        <begin position="76"/>
        <end position="103"/>
    </location>
</feature>
<feature type="turn" evidence="3">
    <location>
        <begin position="104"/>
        <end position="106"/>
    </location>
</feature>
<feature type="helix" evidence="3">
    <location>
        <begin position="108"/>
        <end position="129"/>
    </location>
</feature>
<feature type="helix" evidence="3">
    <location>
        <begin position="134"/>
        <end position="144"/>
    </location>
</feature>
<feature type="helix" evidence="3">
    <location>
        <begin position="150"/>
        <end position="175"/>
    </location>
</feature>
<feature type="helix" evidence="3">
    <location>
        <begin position="177"/>
        <end position="180"/>
    </location>
</feature>
<dbReference type="EMBL" id="U75866">
    <property type="protein sequence ID" value="AAD05353.1"/>
    <property type="molecule type" value="Genomic_DNA"/>
</dbReference>
<dbReference type="EMBL" id="AF069253">
    <property type="protein sequence ID" value="AAC70026.1"/>
    <property type="molecule type" value="Genomic_DNA"/>
</dbReference>
<dbReference type="EMBL" id="AF069255">
    <property type="protein sequence ID" value="AAC70030.1"/>
    <property type="molecule type" value="Genomic_DNA"/>
</dbReference>
<dbReference type="EMBL" id="AF069257">
    <property type="protein sequence ID" value="AAC70034.1"/>
    <property type="molecule type" value="Genomic_DNA"/>
</dbReference>
<dbReference type="EMBL" id="AF069286">
    <property type="protein sequence ID" value="AAC70064.1"/>
    <property type="molecule type" value="Genomic_DNA"/>
</dbReference>
<dbReference type="EMBL" id="AF069269">
    <property type="protein sequence ID" value="AAC70047.1"/>
    <property type="molecule type" value="Genomic_DNA"/>
</dbReference>
<dbReference type="EMBL" id="AF069275">
    <property type="protein sequence ID" value="AAC70053.1"/>
    <property type="molecule type" value="Genomic_DNA"/>
</dbReference>
<dbReference type="EMBL" id="AE000790">
    <property type="protein sequence ID" value="AAC66250.1"/>
    <property type="molecule type" value="Genomic_DNA"/>
</dbReference>
<dbReference type="PIR" id="H70209">
    <property type="entry name" value="H70209"/>
</dbReference>
<dbReference type="RefSeq" id="NP_045697.1">
    <property type="nucleotide sequence ID" value="NC_001857.2"/>
</dbReference>
<dbReference type="RefSeq" id="WP_010890380.1">
    <property type="nucleotide sequence ID" value="NC_001857.2"/>
</dbReference>
<dbReference type="PDB" id="2LQU">
    <property type="method" value="NMR"/>
    <property type="chains" value="A=24-191"/>
</dbReference>
<dbReference type="PDBsum" id="2LQU"/>
<dbReference type="BMRB" id="O50917"/>
<dbReference type="SMR" id="O50917"/>
<dbReference type="EnsemblBacteria" id="AAC66250">
    <property type="protein sequence ID" value="AAC66250"/>
    <property type="gene ID" value="BB_A24"/>
</dbReference>
<dbReference type="KEGG" id="bbu:BB_A24"/>
<dbReference type="PATRIC" id="fig|224326.49.peg.1541"/>
<dbReference type="HOGENOM" id="CLU_124841_0_0_12"/>
<dbReference type="OrthoDB" id="352319at2"/>
<dbReference type="EvolutionaryTrace" id="O50917"/>
<dbReference type="Proteomes" id="UP000001807">
    <property type="component" value="Plasmid lp54"/>
</dbReference>
<dbReference type="GO" id="GO:0016020">
    <property type="term" value="C:membrane"/>
    <property type="evidence" value="ECO:0000314"/>
    <property type="project" value="CAFA"/>
</dbReference>
<dbReference type="Gene3D" id="1.20.1420.40">
    <property type="entry name" value="Decorin-binding protein"/>
    <property type="match status" value="1"/>
</dbReference>
<dbReference type="InterPro" id="IPR003332">
    <property type="entry name" value="Decorin-bd"/>
</dbReference>
<dbReference type="InterPro" id="IPR038353">
    <property type="entry name" value="Decorin-db_sf"/>
</dbReference>
<dbReference type="InterPro" id="IPR054923">
    <property type="entry name" value="Decorin_bind_prot_A"/>
</dbReference>
<dbReference type="NCBIfam" id="NF033713">
    <property type="entry name" value="DbpA"/>
    <property type="match status" value="1"/>
</dbReference>
<dbReference type="Pfam" id="PF02352">
    <property type="entry name" value="Decorin_bind"/>
    <property type="match status" value="1"/>
</dbReference>
<protein>
    <recommendedName>
        <fullName>Decorin-binding protein A</fullName>
    </recommendedName>
</protein>
<evidence type="ECO:0000255" key="1"/>
<evidence type="ECO:0000305" key="2"/>
<evidence type="ECO:0007829" key="3">
    <source>
        <dbReference type="PDB" id="2LQU"/>
    </source>
</evidence>
<accession>O50917</accession>
<accession>O06876</accession>
<accession>Q9R8Q5</accession>